<feature type="chain" id="PRO_1000096073" description="Bifunctional purine biosynthesis protein PurH">
    <location>
        <begin position="1"/>
        <end position="508"/>
    </location>
</feature>
<feature type="domain" description="MGS-like" evidence="2">
    <location>
        <begin position="1"/>
        <end position="145"/>
    </location>
</feature>
<sequence length="508" mass="55471">MTKRALISVSNKDGILEFAKELVALGYEILSTGGTKKMLQDNAVAVTAVDEVTKFPEILDGRVKTLNPMIHGGLLGKFDDDSHQAQMNEHGIEPIEIVCVNLYPFVETISKPNVTWDDAIENIDIGGPTMLRSAAKNHQYVTVIVDSNDYATVLEELKAGGATTIETRRKLAAKVFRHTAAYDSYISNYLTEEEFPESLTMTYELKQNLRYGENPHQKAAFYQKRLGSDFSLAYATQLHGKELSYNNIQDGNAALQIVKEFEMPAAVAVKHMNPCGVGTGVTLEEAFDKAYEADPTSIFGGIIALNMEVDAATAEKLSHIFLEIIIAPAFSQEALDILTKKKNIRLLTIPFEQAKQDQFNVVSVEGGLLVQEPDRYGFANADIKVVTDREPTKQEWEALQLGWSVVKHVKSNAIVVTDSQMTLGVGAGQMNRVGAAKIAFEQAGEKAKGAALASDAFFPMSDTVEAAAAAGITAIIQPGGSIKDQDSIDKANEYGITMIFTGVRHFKH</sequence>
<name>PUR9_LYSSC</name>
<dbReference type="EC" id="2.1.2.3" evidence="1"/>
<dbReference type="EC" id="3.5.4.10" evidence="1"/>
<dbReference type="EMBL" id="CP000817">
    <property type="protein sequence ID" value="ACA37849.1"/>
    <property type="molecule type" value="Genomic_DNA"/>
</dbReference>
<dbReference type="RefSeq" id="WP_012292018.1">
    <property type="nucleotide sequence ID" value="NC_010382.1"/>
</dbReference>
<dbReference type="SMR" id="B1HTV8"/>
<dbReference type="EnsemblBacteria" id="ACA37849">
    <property type="protein sequence ID" value="ACA37849"/>
    <property type="gene ID" value="Bsph_0218"/>
</dbReference>
<dbReference type="KEGG" id="lsp:Bsph_0218"/>
<dbReference type="HOGENOM" id="CLU_016316_5_2_9"/>
<dbReference type="UniPathway" id="UPA00074">
    <property type="reaction ID" value="UER00133"/>
</dbReference>
<dbReference type="UniPathway" id="UPA00074">
    <property type="reaction ID" value="UER00135"/>
</dbReference>
<dbReference type="Proteomes" id="UP000002164">
    <property type="component" value="Chromosome"/>
</dbReference>
<dbReference type="GO" id="GO:0005829">
    <property type="term" value="C:cytosol"/>
    <property type="evidence" value="ECO:0007669"/>
    <property type="project" value="TreeGrafter"/>
</dbReference>
<dbReference type="GO" id="GO:0003937">
    <property type="term" value="F:IMP cyclohydrolase activity"/>
    <property type="evidence" value="ECO:0007669"/>
    <property type="project" value="UniProtKB-UniRule"/>
</dbReference>
<dbReference type="GO" id="GO:0004643">
    <property type="term" value="F:phosphoribosylaminoimidazolecarboxamide formyltransferase activity"/>
    <property type="evidence" value="ECO:0007669"/>
    <property type="project" value="UniProtKB-UniRule"/>
</dbReference>
<dbReference type="GO" id="GO:0006189">
    <property type="term" value="P:'de novo' IMP biosynthetic process"/>
    <property type="evidence" value="ECO:0007669"/>
    <property type="project" value="UniProtKB-UniRule"/>
</dbReference>
<dbReference type="CDD" id="cd01421">
    <property type="entry name" value="IMPCH"/>
    <property type="match status" value="1"/>
</dbReference>
<dbReference type="FunFam" id="3.40.140.20:FF:000001">
    <property type="entry name" value="Bifunctional purine biosynthesis protein PurH"/>
    <property type="match status" value="1"/>
</dbReference>
<dbReference type="FunFam" id="3.40.140.20:FF:000002">
    <property type="entry name" value="Bifunctional purine biosynthesis protein PurH"/>
    <property type="match status" value="1"/>
</dbReference>
<dbReference type="FunFam" id="3.40.50.1380:FF:000001">
    <property type="entry name" value="Bifunctional purine biosynthesis protein PurH"/>
    <property type="match status" value="1"/>
</dbReference>
<dbReference type="Gene3D" id="3.40.140.20">
    <property type="match status" value="2"/>
</dbReference>
<dbReference type="Gene3D" id="3.40.50.1380">
    <property type="entry name" value="Methylglyoxal synthase-like domain"/>
    <property type="match status" value="1"/>
</dbReference>
<dbReference type="HAMAP" id="MF_00139">
    <property type="entry name" value="PurH"/>
    <property type="match status" value="1"/>
</dbReference>
<dbReference type="InterPro" id="IPR024051">
    <property type="entry name" value="AICAR_Tfase_dup_dom_sf"/>
</dbReference>
<dbReference type="InterPro" id="IPR016193">
    <property type="entry name" value="Cytidine_deaminase-like"/>
</dbReference>
<dbReference type="InterPro" id="IPR011607">
    <property type="entry name" value="MGS-like_dom"/>
</dbReference>
<dbReference type="InterPro" id="IPR036914">
    <property type="entry name" value="MGS-like_dom_sf"/>
</dbReference>
<dbReference type="InterPro" id="IPR002695">
    <property type="entry name" value="PurH-like"/>
</dbReference>
<dbReference type="NCBIfam" id="NF002049">
    <property type="entry name" value="PRK00881.1"/>
    <property type="match status" value="1"/>
</dbReference>
<dbReference type="NCBIfam" id="TIGR00355">
    <property type="entry name" value="purH"/>
    <property type="match status" value="1"/>
</dbReference>
<dbReference type="PANTHER" id="PTHR11692:SF0">
    <property type="entry name" value="BIFUNCTIONAL PURINE BIOSYNTHESIS PROTEIN ATIC"/>
    <property type="match status" value="1"/>
</dbReference>
<dbReference type="PANTHER" id="PTHR11692">
    <property type="entry name" value="BIFUNCTIONAL PURINE BIOSYNTHESIS PROTEIN PURH"/>
    <property type="match status" value="1"/>
</dbReference>
<dbReference type="Pfam" id="PF01808">
    <property type="entry name" value="AICARFT_IMPCHas"/>
    <property type="match status" value="1"/>
</dbReference>
<dbReference type="Pfam" id="PF02142">
    <property type="entry name" value="MGS"/>
    <property type="match status" value="1"/>
</dbReference>
<dbReference type="PIRSF" id="PIRSF000414">
    <property type="entry name" value="AICARFT_IMPCHas"/>
    <property type="match status" value="1"/>
</dbReference>
<dbReference type="SMART" id="SM00798">
    <property type="entry name" value="AICARFT_IMPCHas"/>
    <property type="match status" value="1"/>
</dbReference>
<dbReference type="SMART" id="SM00851">
    <property type="entry name" value="MGS"/>
    <property type="match status" value="1"/>
</dbReference>
<dbReference type="SUPFAM" id="SSF53927">
    <property type="entry name" value="Cytidine deaminase-like"/>
    <property type="match status" value="1"/>
</dbReference>
<dbReference type="SUPFAM" id="SSF52335">
    <property type="entry name" value="Methylglyoxal synthase-like"/>
    <property type="match status" value="1"/>
</dbReference>
<dbReference type="PROSITE" id="PS51855">
    <property type="entry name" value="MGS"/>
    <property type="match status" value="1"/>
</dbReference>
<evidence type="ECO:0000255" key="1">
    <source>
        <dbReference type="HAMAP-Rule" id="MF_00139"/>
    </source>
</evidence>
<evidence type="ECO:0000255" key="2">
    <source>
        <dbReference type="PROSITE-ProRule" id="PRU01202"/>
    </source>
</evidence>
<keyword id="KW-0378">Hydrolase</keyword>
<keyword id="KW-0511">Multifunctional enzyme</keyword>
<keyword id="KW-0658">Purine biosynthesis</keyword>
<keyword id="KW-0808">Transferase</keyword>
<proteinExistence type="inferred from homology"/>
<gene>
    <name evidence="1" type="primary">purH</name>
    <name type="ordered locus">Bsph_0218</name>
</gene>
<comment type="catalytic activity">
    <reaction evidence="1">
        <text>(6R)-10-formyltetrahydrofolate + 5-amino-1-(5-phospho-beta-D-ribosyl)imidazole-4-carboxamide = 5-formamido-1-(5-phospho-D-ribosyl)imidazole-4-carboxamide + (6S)-5,6,7,8-tetrahydrofolate</text>
        <dbReference type="Rhea" id="RHEA:22192"/>
        <dbReference type="ChEBI" id="CHEBI:57453"/>
        <dbReference type="ChEBI" id="CHEBI:58467"/>
        <dbReference type="ChEBI" id="CHEBI:58475"/>
        <dbReference type="ChEBI" id="CHEBI:195366"/>
        <dbReference type="EC" id="2.1.2.3"/>
    </reaction>
</comment>
<comment type="catalytic activity">
    <reaction evidence="1">
        <text>IMP + H2O = 5-formamido-1-(5-phospho-D-ribosyl)imidazole-4-carboxamide</text>
        <dbReference type="Rhea" id="RHEA:18445"/>
        <dbReference type="ChEBI" id="CHEBI:15377"/>
        <dbReference type="ChEBI" id="CHEBI:58053"/>
        <dbReference type="ChEBI" id="CHEBI:58467"/>
        <dbReference type="EC" id="3.5.4.10"/>
    </reaction>
</comment>
<comment type="pathway">
    <text evidence="1">Purine metabolism; IMP biosynthesis via de novo pathway; 5-formamido-1-(5-phospho-D-ribosyl)imidazole-4-carboxamide from 5-amino-1-(5-phospho-D-ribosyl)imidazole-4-carboxamide (10-formyl THF route): step 1/1.</text>
</comment>
<comment type="pathway">
    <text evidence="1">Purine metabolism; IMP biosynthesis via de novo pathway; IMP from 5-formamido-1-(5-phospho-D-ribosyl)imidazole-4-carboxamide: step 1/1.</text>
</comment>
<comment type="domain">
    <text evidence="1">The IMP cyclohydrolase activity resides in the N-terminal region.</text>
</comment>
<comment type="similarity">
    <text evidence="1">Belongs to the PurH family.</text>
</comment>
<reference key="1">
    <citation type="journal article" date="2008" name="J. Bacteriol.">
        <title>Complete genome sequence of the mosquitocidal bacterium Bacillus sphaericus C3-41 and comparison with those of closely related Bacillus species.</title>
        <authorList>
            <person name="Hu X."/>
            <person name="Fan W."/>
            <person name="Han B."/>
            <person name="Liu H."/>
            <person name="Zheng D."/>
            <person name="Li Q."/>
            <person name="Dong W."/>
            <person name="Yan J."/>
            <person name="Gao M."/>
            <person name="Berry C."/>
            <person name="Yuan Z."/>
        </authorList>
    </citation>
    <scope>NUCLEOTIDE SEQUENCE [LARGE SCALE GENOMIC DNA]</scope>
    <source>
        <strain>C3-41</strain>
    </source>
</reference>
<protein>
    <recommendedName>
        <fullName evidence="1">Bifunctional purine biosynthesis protein PurH</fullName>
    </recommendedName>
    <domain>
        <recommendedName>
            <fullName evidence="1">Phosphoribosylaminoimidazolecarboxamide formyltransferase</fullName>
            <ecNumber evidence="1">2.1.2.3</ecNumber>
        </recommendedName>
        <alternativeName>
            <fullName evidence="1">AICAR transformylase</fullName>
        </alternativeName>
    </domain>
    <domain>
        <recommendedName>
            <fullName evidence="1">IMP cyclohydrolase</fullName>
            <ecNumber evidence="1">3.5.4.10</ecNumber>
        </recommendedName>
        <alternativeName>
            <fullName evidence="1">ATIC</fullName>
        </alternativeName>
        <alternativeName>
            <fullName evidence="1">IMP synthase</fullName>
        </alternativeName>
        <alternativeName>
            <fullName evidence="1">Inosinicase</fullName>
        </alternativeName>
    </domain>
</protein>
<organism>
    <name type="scientific">Lysinibacillus sphaericus (strain C3-41)</name>
    <dbReference type="NCBI Taxonomy" id="444177"/>
    <lineage>
        <taxon>Bacteria</taxon>
        <taxon>Bacillati</taxon>
        <taxon>Bacillota</taxon>
        <taxon>Bacilli</taxon>
        <taxon>Bacillales</taxon>
        <taxon>Bacillaceae</taxon>
        <taxon>Lysinibacillus</taxon>
    </lineage>
</organism>
<accession>B1HTV8</accession>